<name>YQGF_AERHY</name>
<accession>Q9L3I7</accession>
<evidence type="ECO:0000255" key="1">
    <source>
        <dbReference type="HAMAP-Rule" id="MF_00651"/>
    </source>
</evidence>
<protein>
    <recommendedName>
        <fullName evidence="1">Putative pre-16S rRNA nuclease</fullName>
        <ecNumber evidence="1">3.1.-.-</ecNumber>
    </recommendedName>
</protein>
<sequence>MSSRSIMGFDYGTKSIGVAIGQELTGTGQPLRAIKANDGIPNWDDIDKLLKEWQPDLLVVGLPLNMDGTEQEITVRARKFGNRLHGRFWQAVEFKDERLTTTDARARLFERGGYRALEKGSVDGVSAQLILEAWMEEQYG</sequence>
<reference key="1">
    <citation type="journal article" date="2000" name="J. Antimicrob. Chemother.">
        <title>Aeromonas hydrophila AmpH and CepH beta-lactamases: derepressed expression in mutants of Escherichia coli lacking creB.</title>
        <authorList>
            <person name="Avison M.B."/>
            <person name="Niumsup P."/>
            <person name="Walsh T.R."/>
            <person name="Bennett P.M."/>
        </authorList>
    </citation>
    <scope>NUCLEOTIDE SEQUENCE [GENOMIC DNA]</scope>
    <source>
        <strain>T429125</strain>
    </source>
</reference>
<proteinExistence type="inferred from homology"/>
<dbReference type="EC" id="3.1.-.-" evidence="1"/>
<dbReference type="EMBL" id="AJ276030">
    <property type="protein sequence ID" value="CAB76923.1"/>
    <property type="molecule type" value="Genomic_DNA"/>
</dbReference>
<dbReference type="SMR" id="Q9L3I7"/>
<dbReference type="eggNOG" id="COG0816">
    <property type="taxonomic scope" value="Bacteria"/>
</dbReference>
<dbReference type="GO" id="GO:0005829">
    <property type="term" value="C:cytosol"/>
    <property type="evidence" value="ECO:0007669"/>
    <property type="project" value="TreeGrafter"/>
</dbReference>
<dbReference type="GO" id="GO:0004518">
    <property type="term" value="F:nuclease activity"/>
    <property type="evidence" value="ECO:0007669"/>
    <property type="project" value="UniProtKB-KW"/>
</dbReference>
<dbReference type="GO" id="GO:0000967">
    <property type="term" value="P:rRNA 5'-end processing"/>
    <property type="evidence" value="ECO:0007669"/>
    <property type="project" value="UniProtKB-UniRule"/>
</dbReference>
<dbReference type="CDD" id="cd16964">
    <property type="entry name" value="YqgF"/>
    <property type="match status" value="1"/>
</dbReference>
<dbReference type="FunFam" id="3.30.420.140:FF:000002">
    <property type="entry name" value="Putative pre-16S rRNA nuclease"/>
    <property type="match status" value="1"/>
</dbReference>
<dbReference type="Gene3D" id="3.30.420.140">
    <property type="entry name" value="YqgF/RNase H-like domain"/>
    <property type="match status" value="1"/>
</dbReference>
<dbReference type="HAMAP" id="MF_00651">
    <property type="entry name" value="Nuclease_YqgF"/>
    <property type="match status" value="1"/>
</dbReference>
<dbReference type="InterPro" id="IPR012337">
    <property type="entry name" value="RNaseH-like_sf"/>
</dbReference>
<dbReference type="InterPro" id="IPR005227">
    <property type="entry name" value="YqgF"/>
</dbReference>
<dbReference type="InterPro" id="IPR006641">
    <property type="entry name" value="YqgF/RNaseH-like_dom"/>
</dbReference>
<dbReference type="InterPro" id="IPR037027">
    <property type="entry name" value="YqgF/RNaseH-like_dom_sf"/>
</dbReference>
<dbReference type="NCBIfam" id="TIGR00250">
    <property type="entry name" value="RNAse_H_YqgF"/>
    <property type="match status" value="1"/>
</dbReference>
<dbReference type="PANTHER" id="PTHR33317">
    <property type="entry name" value="POLYNUCLEOTIDYL TRANSFERASE, RIBONUCLEASE H-LIKE SUPERFAMILY PROTEIN"/>
    <property type="match status" value="1"/>
</dbReference>
<dbReference type="PANTHER" id="PTHR33317:SF4">
    <property type="entry name" value="POLYNUCLEOTIDYL TRANSFERASE, RIBONUCLEASE H-LIKE SUPERFAMILY PROTEIN"/>
    <property type="match status" value="1"/>
</dbReference>
<dbReference type="Pfam" id="PF03652">
    <property type="entry name" value="RuvX"/>
    <property type="match status" value="1"/>
</dbReference>
<dbReference type="SMART" id="SM00732">
    <property type="entry name" value="YqgFc"/>
    <property type="match status" value="1"/>
</dbReference>
<dbReference type="SUPFAM" id="SSF53098">
    <property type="entry name" value="Ribonuclease H-like"/>
    <property type="match status" value="1"/>
</dbReference>
<comment type="function">
    <text evidence="1">Could be a nuclease involved in processing of the 5'-end of pre-16S rRNA.</text>
</comment>
<comment type="subcellular location">
    <subcellularLocation>
        <location evidence="1">Cytoplasm</location>
    </subcellularLocation>
</comment>
<comment type="similarity">
    <text evidence="1">Belongs to the YqgF nuclease family.</text>
</comment>
<keyword id="KW-0963">Cytoplasm</keyword>
<keyword id="KW-0378">Hydrolase</keyword>
<keyword id="KW-0540">Nuclease</keyword>
<keyword id="KW-0690">Ribosome biogenesis</keyword>
<feature type="chain" id="PRO_0000172008" description="Putative pre-16S rRNA nuclease">
    <location>
        <begin position="1"/>
        <end position="140"/>
    </location>
</feature>
<organism>
    <name type="scientific">Aeromonas hydrophila</name>
    <dbReference type="NCBI Taxonomy" id="644"/>
    <lineage>
        <taxon>Bacteria</taxon>
        <taxon>Pseudomonadati</taxon>
        <taxon>Pseudomonadota</taxon>
        <taxon>Gammaproteobacteria</taxon>
        <taxon>Aeromonadales</taxon>
        <taxon>Aeromonadaceae</taxon>
        <taxon>Aeromonas</taxon>
    </lineage>
</organism>